<gene>
    <name evidence="1" type="primary">rpoC1</name>
</gene>
<reference key="1">
    <citation type="submission" date="2007-03" db="EMBL/GenBank/DDBJ databases">
        <title>Sequencing analysis of Nasturtium officinale chloroplast DNA.</title>
        <authorList>
            <person name="Hosouchi T."/>
            <person name="Tsuruoka H."/>
            <person name="Kotani H."/>
        </authorList>
    </citation>
    <scope>NUCLEOTIDE SEQUENCE [LARGE SCALE GENOMIC DNA]</scope>
</reference>
<comment type="function">
    <text evidence="1">DNA-dependent RNA polymerase catalyzes the transcription of DNA into RNA using the four ribonucleoside triphosphates as substrates.</text>
</comment>
<comment type="catalytic activity">
    <reaction evidence="1">
        <text>RNA(n) + a ribonucleoside 5'-triphosphate = RNA(n+1) + diphosphate</text>
        <dbReference type="Rhea" id="RHEA:21248"/>
        <dbReference type="Rhea" id="RHEA-COMP:14527"/>
        <dbReference type="Rhea" id="RHEA-COMP:17342"/>
        <dbReference type="ChEBI" id="CHEBI:33019"/>
        <dbReference type="ChEBI" id="CHEBI:61557"/>
        <dbReference type="ChEBI" id="CHEBI:140395"/>
        <dbReference type="EC" id="2.7.7.6"/>
    </reaction>
</comment>
<comment type="cofactor">
    <cofactor evidence="1">
        <name>Mg(2+)</name>
        <dbReference type="ChEBI" id="CHEBI:18420"/>
    </cofactor>
    <text evidence="1">Binds 1 Mg(2+) ion per subunit.</text>
</comment>
<comment type="cofactor">
    <cofactor evidence="1">
        <name>Zn(2+)</name>
        <dbReference type="ChEBI" id="CHEBI:29105"/>
    </cofactor>
    <text evidence="1">Binds 1 Zn(2+) ion per subunit.</text>
</comment>
<comment type="subunit">
    <text evidence="1">In plastids the minimal PEP RNA polymerase catalytic core is composed of four subunits: alpha, beta, beta', and beta''. When a (nuclear-encoded) sigma factor is associated with the core the holoenzyme is formed, which can initiate transcription.</text>
</comment>
<comment type="subcellular location">
    <subcellularLocation>
        <location evidence="1">Plastid</location>
        <location evidence="1">Chloroplast</location>
    </subcellularLocation>
</comment>
<comment type="similarity">
    <text evidence="1">Belongs to the RNA polymerase beta' chain family. RpoC1 subfamily.</text>
</comment>
<geneLocation type="chloroplast"/>
<dbReference type="EC" id="2.7.7.6" evidence="1"/>
<dbReference type="EMBL" id="AP009376">
    <property type="protein sequence ID" value="BAF50629.1"/>
    <property type="molecule type" value="Genomic_DNA"/>
</dbReference>
<dbReference type="RefSeq" id="YP_001123805.1">
    <property type="nucleotide sequence ID" value="NC_009275.1"/>
</dbReference>
<dbReference type="SMR" id="A4QLS4"/>
<dbReference type="GeneID" id="4962143"/>
<dbReference type="GO" id="GO:0009507">
    <property type="term" value="C:chloroplast"/>
    <property type="evidence" value="ECO:0007669"/>
    <property type="project" value="UniProtKB-SubCell"/>
</dbReference>
<dbReference type="GO" id="GO:0000428">
    <property type="term" value="C:DNA-directed RNA polymerase complex"/>
    <property type="evidence" value="ECO:0007669"/>
    <property type="project" value="UniProtKB-KW"/>
</dbReference>
<dbReference type="GO" id="GO:0005739">
    <property type="term" value="C:mitochondrion"/>
    <property type="evidence" value="ECO:0007669"/>
    <property type="project" value="GOC"/>
</dbReference>
<dbReference type="GO" id="GO:0003677">
    <property type="term" value="F:DNA binding"/>
    <property type="evidence" value="ECO:0007669"/>
    <property type="project" value="UniProtKB-UniRule"/>
</dbReference>
<dbReference type="GO" id="GO:0003899">
    <property type="term" value="F:DNA-directed RNA polymerase activity"/>
    <property type="evidence" value="ECO:0007669"/>
    <property type="project" value="UniProtKB-UniRule"/>
</dbReference>
<dbReference type="GO" id="GO:0000287">
    <property type="term" value="F:magnesium ion binding"/>
    <property type="evidence" value="ECO:0007669"/>
    <property type="project" value="UniProtKB-UniRule"/>
</dbReference>
<dbReference type="GO" id="GO:0008270">
    <property type="term" value="F:zinc ion binding"/>
    <property type="evidence" value="ECO:0007669"/>
    <property type="project" value="UniProtKB-UniRule"/>
</dbReference>
<dbReference type="GO" id="GO:0006351">
    <property type="term" value="P:DNA-templated transcription"/>
    <property type="evidence" value="ECO:0007669"/>
    <property type="project" value="UniProtKB-UniRule"/>
</dbReference>
<dbReference type="FunFam" id="1.10.40.90:FF:000002">
    <property type="entry name" value="DNA-directed RNA polymerase subunit"/>
    <property type="match status" value="1"/>
</dbReference>
<dbReference type="FunFam" id="4.10.860.120:FF:000007">
    <property type="entry name" value="DNA-directed RNA polymerase subunit gamma"/>
    <property type="match status" value="1"/>
</dbReference>
<dbReference type="Gene3D" id="1.10.40.90">
    <property type="match status" value="1"/>
</dbReference>
<dbReference type="Gene3D" id="2.40.40.20">
    <property type="match status" value="1"/>
</dbReference>
<dbReference type="Gene3D" id="4.10.860.120">
    <property type="entry name" value="RNA polymerase II, clamp domain"/>
    <property type="match status" value="1"/>
</dbReference>
<dbReference type="Gene3D" id="1.10.274.100">
    <property type="entry name" value="RNA polymerase Rpb1, domain 3"/>
    <property type="match status" value="1"/>
</dbReference>
<dbReference type="HAMAP" id="MF_01323">
    <property type="entry name" value="RNApol_bact_RpoC1"/>
    <property type="match status" value="1"/>
</dbReference>
<dbReference type="InterPro" id="IPR045867">
    <property type="entry name" value="DNA-dir_RpoC_beta_prime"/>
</dbReference>
<dbReference type="InterPro" id="IPR000722">
    <property type="entry name" value="RNA_pol_asu"/>
</dbReference>
<dbReference type="InterPro" id="IPR006592">
    <property type="entry name" value="RNA_pol_N"/>
</dbReference>
<dbReference type="InterPro" id="IPR007080">
    <property type="entry name" value="RNA_pol_Rpb1_1"/>
</dbReference>
<dbReference type="InterPro" id="IPR042102">
    <property type="entry name" value="RNA_pol_Rpb1_3_sf"/>
</dbReference>
<dbReference type="InterPro" id="IPR044893">
    <property type="entry name" value="RNA_pol_Rpb1_clamp_domain"/>
</dbReference>
<dbReference type="InterPro" id="IPR034678">
    <property type="entry name" value="RNApol_RpoC1"/>
</dbReference>
<dbReference type="PANTHER" id="PTHR19376">
    <property type="entry name" value="DNA-DIRECTED RNA POLYMERASE"/>
    <property type="match status" value="1"/>
</dbReference>
<dbReference type="PANTHER" id="PTHR19376:SF54">
    <property type="entry name" value="DNA-DIRECTED RNA POLYMERASE SUBUNIT BETA"/>
    <property type="match status" value="1"/>
</dbReference>
<dbReference type="Pfam" id="PF04997">
    <property type="entry name" value="RNA_pol_Rpb1_1"/>
    <property type="match status" value="1"/>
</dbReference>
<dbReference type="Pfam" id="PF00623">
    <property type="entry name" value="RNA_pol_Rpb1_2"/>
    <property type="match status" value="2"/>
</dbReference>
<dbReference type="SMART" id="SM00663">
    <property type="entry name" value="RPOLA_N"/>
    <property type="match status" value="1"/>
</dbReference>
<dbReference type="SUPFAM" id="SSF64484">
    <property type="entry name" value="beta and beta-prime subunits of DNA dependent RNA-polymerase"/>
    <property type="match status" value="1"/>
</dbReference>
<sequence length="680" mass="78572">MIDRYKHQQLRIGLVSPQQISAWATKIIPNGEIVGEVTKPYTFHYKTNKPEKDGLFCERIFGPIKSGICACGNYRVIGDEKDDPKFCEQCGVEFVDSRIRRYQMGYIKLTCPVTHVWYLKRLPSYIANLLDKPLKELEGLVYCDFSFARPITKKPTFLRLRGSFEYEIQSWKYSIPLFFTTQGFDIFRNREISTGASAIREQLADLDLRIIIENSLVEWKQLGEEGPTGNEWEDRKIVRRKDFLVRRMELAKHFIRTNIEPEWMVLCLLPVLPPELRPIIQIEGGKLMSSDINELYRRVIYRNNTLTDLLTTSRSTPGELVMCQEKLVQEAVDTLLDNGIRGQPMRDGHNKVYKSFSDVIEGKEGRFRETLLGKRVDYSGRSVIVVGPSLSLHRCGLPREIAIELFQTFVIRGLIRQHLASNIGVAKSQIREKKPIVWEILQEVMQGHPVLLNRAPTLHRLGIQSFQPILVEGRTICLHPLVCKGFNADFDGDQMAVHVPLSLEAQAEARLLMFSHMNLLSPAIGDPISVPTQDMLIGLYVLTSGTRRGICANRYNPCNRKNYQNERIYETNYKYTKEPFFCNSYDAIGAYRQKRINLDSPLWLRWQLDQRVIASKEVPIEVHYESFGNYHEIYAHYLIVRSVKKETFCIYIRTTVGHISFYRELEEAVQGFSQACSYDT</sequence>
<keyword id="KW-0150">Chloroplast</keyword>
<keyword id="KW-0240">DNA-directed RNA polymerase</keyword>
<keyword id="KW-0460">Magnesium</keyword>
<keyword id="KW-0479">Metal-binding</keyword>
<keyword id="KW-0548">Nucleotidyltransferase</keyword>
<keyword id="KW-0934">Plastid</keyword>
<keyword id="KW-0804">Transcription</keyword>
<keyword id="KW-0808">Transferase</keyword>
<keyword id="KW-0862">Zinc</keyword>
<protein>
    <recommendedName>
        <fullName evidence="1">DNA-directed RNA polymerase subunit beta'</fullName>
        <ecNumber evidence="1">2.7.7.6</ecNumber>
    </recommendedName>
    <alternativeName>
        <fullName evidence="1">PEP</fullName>
    </alternativeName>
    <alternativeName>
        <fullName evidence="1">Plastid-encoded RNA polymerase subunit beta'</fullName>
        <shortName evidence="1">RNA polymerase subunit beta'</shortName>
    </alternativeName>
</protein>
<evidence type="ECO:0000255" key="1">
    <source>
        <dbReference type="HAMAP-Rule" id="MF_01323"/>
    </source>
</evidence>
<feature type="chain" id="PRO_0000353501" description="DNA-directed RNA polymerase subunit beta'">
    <location>
        <begin position="1"/>
        <end position="680"/>
    </location>
</feature>
<feature type="binding site" evidence="1">
    <location>
        <position position="69"/>
    </location>
    <ligand>
        <name>Zn(2+)</name>
        <dbReference type="ChEBI" id="CHEBI:29105"/>
    </ligand>
</feature>
<feature type="binding site" evidence="1">
    <location>
        <position position="71"/>
    </location>
    <ligand>
        <name>Zn(2+)</name>
        <dbReference type="ChEBI" id="CHEBI:29105"/>
    </ligand>
</feature>
<feature type="binding site" evidence="1">
    <location>
        <position position="87"/>
    </location>
    <ligand>
        <name>Zn(2+)</name>
        <dbReference type="ChEBI" id="CHEBI:29105"/>
    </ligand>
</feature>
<feature type="binding site" evidence="1">
    <location>
        <position position="90"/>
    </location>
    <ligand>
        <name>Zn(2+)</name>
        <dbReference type="ChEBI" id="CHEBI:29105"/>
    </ligand>
</feature>
<feature type="binding site" evidence="1">
    <location>
        <position position="489"/>
    </location>
    <ligand>
        <name>Mg(2+)</name>
        <dbReference type="ChEBI" id="CHEBI:18420"/>
    </ligand>
</feature>
<feature type="binding site" evidence="1">
    <location>
        <position position="491"/>
    </location>
    <ligand>
        <name>Mg(2+)</name>
        <dbReference type="ChEBI" id="CHEBI:18420"/>
    </ligand>
</feature>
<feature type="binding site" evidence="1">
    <location>
        <position position="493"/>
    </location>
    <ligand>
        <name>Mg(2+)</name>
        <dbReference type="ChEBI" id="CHEBI:18420"/>
    </ligand>
</feature>
<name>RPOC1_NASOF</name>
<organism>
    <name type="scientific">Nasturtium officinale</name>
    <name type="common">Watercress</name>
    <name type="synonym">Rorippa nasturtium-aquaticum</name>
    <dbReference type="NCBI Taxonomy" id="65948"/>
    <lineage>
        <taxon>Eukaryota</taxon>
        <taxon>Viridiplantae</taxon>
        <taxon>Streptophyta</taxon>
        <taxon>Embryophyta</taxon>
        <taxon>Tracheophyta</taxon>
        <taxon>Spermatophyta</taxon>
        <taxon>Magnoliopsida</taxon>
        <taxon>eudicotyledons</taxon>
        <taxon>Gunneridae</taxon>
        <taxon>Pentapetalae</taxon>
        <taxon>rosids</taxon>
        <taxon>malvids</taxon>
        <taxon>Brassicales</taxon>
        <taxon>Brassicaceae</taxon>
        <taxon>Cardamineae</taxon>
        <taxon>Nasturtium</taxon>
    </lineage>
</organism>
<accession>A4QLS4</accession>
<proteinExistence type="inferred from homology"/>